<proteinExistence type="inferred from homology"/>
<protein>
    <recommendedName>
        <fullName evidence="1">Na(+)/H(+) antiporter NhaA</fullName>
    </recommendedName>
    <alternativeName>
        <fullName evidence="1">Sodium/proton antiporter NhaA</fullName>
    </alternativeName>
</protein>
<gene>
    <name evidence="1" type="primary">nhaA</name>
    <name type="ordered locus">YPTS_0637</name>
</gene>
<accession>B2K3M2</accession>
<name>NHAA_YERPB</name>
<comment type="function">
    <text evidence="1">Na(+)/H(+) antiporter that extrudes sodium in exchange for external protons.</text>
</comment>
<comment type="catalytic activity">
    <reaction evidence="1">
        <text>Na(+)(in) + 2 H(+)(out) = Na(+)(out) + 2 H(+)(in)</text>
        <dbReference type="Rhea" id="RHEA:29251"/>
        <dbReference type="ChEBI" id="CHEBI:15378"/>
        <dbReference type="ChEBI" id="CHEBI:29101"/>
    </reaction>
    <physiologicalReaction direction="left-to-right" evidence="1">
        <dbReference type="Rhea" id="RHEA:29252"/>
    </physiologicalReaction>
</comment>
<comment type="subcellular location">
    <subcellularLocation>
        <location evidence="1">Cell inner membrane</location>
        <topology evidence="1">Multi-pass membrane protein</topology>
    </subcellularLocation>
</comment>
<comment type="similarity">
    <text evidence="1">Belongs to the NhaA Na(+)/H(+) (TC 2.A.33) antiporter family.</text>
</comment>
<reference key="1">
    <citation type="submission" date="2008-04" db="EMBL/GenBank/DDBJ databases">
        <title>Complete sequence of Yersinia pseudotuberculosis PB1/+.</title>
        <authorList>
            <person name="Copeland A."/>
            <person name="Lucas S."/>
            <person name="Lapidus A."/>
            <person name="Glavina del Rio T."/>
            <person name="Dalin E."/>
            <person name="Tice H."/>
            <person name="Bruce D."/>
            <person name="Goodwin L."/>
            <person name="Pitluck S."/>
            <person name="Munk A.C."/>
            <person name="Brettin T."/>
            <person name="Detter J.C."/>
            <person name="Han C."/>
            <person name="Tapia R."/>
            <person name="Schmutz J."/>
            <person name="Larimer F."/>
            <person name="Land M."/>
            <person name="Hauser L."/>
            <person name="Challacombe J.F."/>
            <person name="Green L."/>
            <person name="Lindler L.E."/>
            <person name="Nikolich M.P."/>
            <person name="Richardson P."/>
        </authorList>
    </citation>
    <scope>NUCLEOTIDE SEQUENCE [LARGE SCALE GENOMIC DNA]</scope>
    <source>
        <strain>PB1/+</strain>
    </source>
</reference>
<keyword id="KW-0050">Antiport</keyword>
<keyword id="KW-0997">Cell inner membrane</keyword>
<keyword id="KW-1003">Cell membrane</keyword>
<keyword id="KW-0406">Ion transport</keyword>
<keyword id="KW-0472">Membrane</keyword>
<keyword id="KW-0915">Sodium</keyword>
<keyword id="KW-0739">Sodium transport</keyword>
<keyword id="KW-0812">Transmembrane</keyword>
<keyword id="KW-1133">Transmembrane helix</keyword>
<keyword id="KW-0813">Transport</keyword>
<dbReference type="EMBL" id="CP001048">
    <property type="protein sequence ID" value="ACC87621.1"/>
    <property type="molecule type" value="Genomic_DNA"/>
</dbReference>
<dbReference type="RefSeq" id="WP_011191700.1">
    <property type="nucleotide sequence ID" value="NZ_CP009780.1"/>
</dbReference>
<dbReference type="SMR" id="B2K3M2"/>
<dbReference type="GeneID" id="49787385"/>
<dbReference type="KEGG" id="ypb:YPTS_0637"/>
<dbReference type="PATRIC" id="fig|502801.10.peg.4319"/>
<dbReference type="GO" id="GO:0005886">
    <property type="term" value="C:plasma membrane"/>
    <property type="evidence" value="ECO:0007669"/>
    <property type="project" value="UniProtKB-SubCell"/>
</dbReference>
<dbReference type="GO" id="GO:0015385">
    <property type="term" value="F:sodium:proton antiporter activity"/>
    <property type="evidence" value="ECO:0007669"/>
    <property type="project" value="TreeGrafter"/>
</dbReference>
<dbReference type="GO" id="GO:0006885">
    <property type="term" value="P:regulation of pH"/>
    <property type="evidence" value="ECO:0007669"/>
    <property type="project" value="InterPro"/>
</dbReference>
<dbReference type="Gene3D" id="1.20.1530.10">
    <property type="entry name" value="Na+/H+ antiporter like domain"/>
    <property type="match status" value="1"/>
</dbReference>
<dbReference type="HAMAP" id="MF_01844">
    <property type="entry name" value="NhaA"/>
    <property type="match status" value="1"/>
</dbReference>
<dbReference type="InterPro" id="IPR023171">
    <property type="entry name" value="Na/H_antiporter_dom_sf"/>
</dbReference>
<dbReference type="InterPro" id="IPR004670">
    <property type="entry name" value="NhaA"/>
</dbReference>
<dbReference type="NCBIfam" id="TIGR00773">
    <property type="entry name" value="NhaA"/>
    <property type="match status" value="1"/>
</dbReference>
<dbReference type="NCBIfam" id="NF007111">
    <property type="entry name" value="PRK09560.1"/>
    <property type="match status" value="1"/>
</dbReference>
<dbReference type="NCBIfam" id="NF007112">
    <property type="entry name" value="PRK09561.1"/>
    <property type="match status" value="1"/>
</dbReference>
<dbReference type="PANTHER" id="PTHR30341:SF0">
    <property type="entry name" value="NA(+)_H(+) ANTIPORTER NHAA"/>
    <property type="match status" value="1"/>
</dbReference>
<dbReference type="PANTHER" id="PTHR30341">
    <property type="entry name" value="SODIUM ION/PROTON ANTIPORTER NHAA-RELATED"/>
    <property type="match status" value="1"/>
</dbReference>
<dbReference type="Pfam" id="PF06965">
    <property type="entry name" value="Na_H_antiport_1"/>
    <property type="match status" value="1"/>
</dbReference>
<feature type="chain" id="PRO_1000188444" description="Na(+)/H(+) antiporter NhaA">
    <location>
        <begin position="1"/>
        <end position="394"/>
    </location>
</feature>
<feature type="transmembrane region" description="Helical" evidence="1">
    <location>
        <begin position="14"/>
        <end position="34"/>
    </location>
</feature>
<feature type="transmembrane region" description="Helical" evidence="1">
    <location>
        <begin position="59"/>
        <end position="79"/>
    </location>
</feature>
<feature type="transmembrane region" description="Helical" evidence="1">
    <location>
        <begin position="95"/>
        <end position="115"/>
    </location>
</feature>
<feature type="transmembrane region" description="Helical" evidence="1">
    <location>
        <begin position="125"/>
        <end position="145"/>
    </location>
</feature>
<feature type="transmembrane region" description="Helical" evidence="1">
    <location>
        <begin position="154"/>
        <end position="174"/>
    </location>
</feature>
<feature type="transmembrane region" description="Helical" evidence="1">
    <location>
        <begin position="179"/>
        <end position="199"/>
    </location>
</feature>
<feature type="transmembrane region" description="Helical" evidence="1">
    <location>
        <begin position="213"/>
        <end position="233"/>
    </location>
</feature>
<feature type="transmembrane region" description="Helical" evidence="1">
    <location>
        <begin position="254"/>
        <end position="274"/>
    </location>
</feature>
<feature type="transmembrane region" description="Helical" evidence="1">
    <location>
        <begin position="292"/>
        <end position="312"/>
    </location>
</feature>
<feature type="transmembrane region" description="Helical" evidence="1">
    <location>
        <begin position="328"/>
        <end position="348"/>
    </location>
</feature>
<feature type="transmembrane region" description="Helical" evidence="1">
    <location>
        <begin position="363"/>
        <end position="383"/>
    </location>
</feature>
<evidence type="ECO:0000255" key="1">
    <source>
        <dbReference type="HAMAP-Rule" id="MF_01844"/>
    </source>
</evidence>
<organism>
    <name type="scientific">Yersinia pseudotuberculosis serotype IB (strain PB1/+)</name>
    <dbReference type="NCBI Taxonomy" id="502801"/>
    <lineage>
        <taxon>Bacteria</taxon>
        <taxon>Pseudomonadati</taxon>
        <taxon>Pseudomonadota</taxon>
        <taxon>Gammaproteobacteria</taxon>
        <taxon>Enterobacterales</taxon>
        <taxon>Yersiniaceae</taxon>
        <taxon>Yersinia</taxon>
    </lineage>
</organism>
<sequence>MTNIIRQFLRQEAAGGLILIIAAAIALLMANSALQGVYQSFLDIPVSIKIASLDISKPLLLWINDGLMAVFFLMVGLEVKRELMEGSLAGRDKAVFPAIAALGGMLAPALIYLLFNGADEVTRQGWAIPAATDIAFALGVMALLGNRVPTGLKVFLLALAIIDDLGVIIIIALFYTQQVSLQSLGIAAAAIALLAYMNWRGVGKTSAYLLVGLVLWVCILKSGVHATLAGVIVGFMIPLHTQDQRSPSESLEHGLHPWVAYLILPLFAFANAGVSLQGVSLSGLTSLLPMGIATGLFIGKPLGIFTFSWLAVKLGIAKLPDAINFKQIFAVSVLCGIGFTMSIFIASLAFEGTDIALTTYSKLGILLGSTTAAVVGYSLLRLVLPARRKAVNVR</sequence>